<keyword id="KW-0227">DNA damage</keyword>
<keyword id="KW-0233">DNA recombination</keyword>
<keyword id="KW-0234">DNA repair</keyword>
<keyword id="KW-0255">Endonuclease</keyword>
<keyword id="KW-0378">Hydrolase</keyword>
<keyword id="KW-0479">Metal-binding</keyword>
<keyword id="KW-0540">Nuclease</keyword>
<keyword id="KW-0539">Nucleus</keyword>
<keyword id="KW-1185">Reference proteome</keyword>
<keyword id="KW-0862">Zinc</keyword>
<keyword id="KW-0863">Zinc-finger</keyword>
<feature type="chain" id="PRO_0000383756" description="Structure-specific endonuclease subunit SLX1 homolog">
    <location>
        <begin position="1"/>
        <end position="297"/>
    </location>
</feature>
<feature type="domain" description="GIY-YIG" evidence="1">
    <location>
        <begin position="22"/>
        <end position="108"/>
    </location>
</feature>
<feature type="zinc finger region" description="SLX1-type" evidence="1">
    <location>
        <begin position="196"/>
        <end position="249"/>
    </location>
</feature>
<feature type="region of interest" description="Disordered" evidence="2">
    <location>
        <begin position="275"/>
        <end position="297"/>
    </location>
</feature>
<gene>
    <name type="primary">slx1</name>
    <name type="ORF">CG18271</name>
</gene>
<name>SLX1_DROME</name>
<proteinExistence type="evidence at protein level"/>
<sequence length="297" mass="34092">MNSYDPQDTASQQEESVALKGHFYGVYLLCSQSLDPRYRGKCYVGFTVNPKRRIRQHNLGCDFGGARKTSRKGPWLMVMIVHGFPNNTVALQFEWAWQQPSLSTRLKMYPELKRKLPRETFFDYNFRILSNMLGVGPWNRLPLTVRWLETDYERPFSKALPKHMEIVSGKVSISASQRRRPDDAVPPPPVAWASECHLCMQEMEQPEKSRLGCTNQMCRLTCHMVCLANYLLGDEPGHYIPVGGECPLCETRLSWAALLQRKRLLLGVPEELQDHDEDLSDDIDVDSDIEDTPELSD</sequence>
<dbReference type="EC" id="3.1.-.-" evidence="1"/>
<dbReference type="EMBL" id="AE014297">
    <property type="protein sequence ID" value="AAF52110.3"/>
    <property type="molecule type" value="Genomic_DNA"/>
</dbReference>
<dbReference type="EMBL" id="BT029079">
    <property type="protein sequence ID" value="ABJ17012.1"/>
    <property type="status" value="ALT_INIT"/>
    <property type="molecule type" value="mRNA"/>
</dbReference>
<dbReference type="RefSeq" id="NP_649484.3">
    <property type="nucleotide sequence ID" value="NM_141227.3"/>
</dbReference>
<dbReference type="SMR" id="Q9VN41"/>
<dbReference type="BioGRID" id="65797">
    <property type="interactions" value="9"/>
</dbReference>
<dbReference type="FunCoup" id="Q9VN41">
    <property type="interactions" value="821"/>
</dbReference>
<dbReference type="IntAct" id="Q9VN41">
    <property type="interactions" value="7"/>
</dbReference>
<dbReference type="STRING" id="7227.FBpp0290511"/>
<dbReference type="PaxDb" id="7227-FBpp0290511"/>
<dbReference type="DNASU" id="40578"/>
<dbReference type="EnsemblMetazoa" id="FBtr0301296">
    <property type="protein sequence ID" value="FBpp0290511"/>
    <property type="gene ID" value="FBgn0037263"/>
</dbReference>
<dbReference type="GeneID" id="40578"/>
<dbReference type="KEGG" id="dme:Dmel_CG18271"/>
<dbReference type="UCSC" id="CG18271-RA">
    <property type="organism name" value="d. melanogaster"/>
</dbReference>
<dbReference type="AGR" id="FB:FBgn0037263"/>
<dbReference type="CTD" id="40578"/>
<dbReference type="FlyBase" id="FBgn0037263">
    <property type="gene designation" value="slx1"/>
</dbReference>
<dbReference type="VEuPathDB" id="VectorBase:FBgn0037263"/>
<dbReference type="eggNOG" id="KOG3005">
    <property type="taxonomic scope" value="Eukaryota"/>
</dbReference>
<dbReference type="GeneTree" id="ENSGT00390000013368"/>
<dbReference type="HOGENOM" id="CLU_030739_0_0_1"/>
<dbReference type="InParanoid" id="Q9VN41"/>
<dbReference type="OMA" id="HNRGCDF"/>
<dbReference type="OrthoDB" id="24645at2759"/>
<dbReference type="PhylomeDB" id="Q9VN41"/>
<dbReference type="SignaLink" id="Q9VN41"/>
<dbReference type="BioGRID-ORCS" id="40578">
    <property type="hits" value="0 hits in 3 CRISPR screens"/>
</dbReference>
<dbReference type="GenomeRNAi" id="40578"/>
<dbReference type="PRO" id="PR:Q9VN41"/>
<dbReference type="Proteomes" id="UP000000803">
    <property type="component" value="Chromosome 3R"/>
</dbReference>
<dbReference type="Bgee" id="FBgn0037263">
    <property type="expression patterns" value="Expressed in cleaving embryo and 13 other cell types or tissues"/>
</dbReference>
<dbReference type="GO" id="GO:0033557">
    <property type="term" value="C:Slx1-Slx4 complex"/>
    <property type="evidence" value="ECO:0000314"/>
    <property type="project" value="UniProtKB"/>
</dbReference>
<dbReference type="GO" id="GO:0017108">
    <property type="term" value="F:5'-flap endonuclease activity"/>
    <property type="evidence" value="ECO:0000318"/>
    <property type="project" value="GO_Central"/>
</dbReference>
<dbReference type="GO" id="GO:0008821">
    <property type="term" value="F:crossover junction DNA endonuclease activity"/>
    <property type="evidence" value="ECO:0000318"/>
    <property type="project" value="GO_Central"/>
</dbReference>
<dbReference type="GO" id="GO:0004520">
    <property type="term" value="F:DNA endonuclease activity"/>
    <property type="evidence" value="ECO:0000250"/>
    <property type="project" value="FlyBase"/>
</dbReference>
<dbReference type="GO" id="GO:0008270">
    <property type="term" value="F:zinc ion binding"/>
    <property type="evidence" value="ECO:0007669"/>
    <property type="project" value="UniProtKB-KW"/>
</dbReference>
<dbReference type="GO" id="GO:0000724">
    <property type="term" value="P:double-strand break repair via homologous recombination"/>
    <property type="evidence" value="ECO:0000318"/>
    <property type="project" value="GO_Central"/>
</dbReference>
<dbReference type="CDD" id="cd10455">
    <property type="entry name" value="GIY-YIG_SLX1"/>
    <property type="match status" value="1"/>
</dbReference>
<dbReference type="FunFam" id="3.40.1440.10:FF:000012">
    <property type="entry name" value="Structure-specific endonuclease subunit SLX1 homolog"/>
    <property type="match status" value="1"/>
</dbReference>
<dbReference type="Gene3D" id="3.40.1440.10">
    <property type="entry name" value="GIY-YIG endonuclease"/>
    <property type="match status" value="1"/>
</dbReference>
<dbReference type="Gene3D" id="3.30.40.10">
    <property type="entry name" value="Zinc/RING finger domain, C3HC4 (zinc finger)"/>
    <property type="match status" value="1"/>
</dbReference>
<dbReference type="HAMAP" id="MF_03100">
    <property type="entry name" value="Endonuc_su_Slx1"/>
    <property type="match status" value="1"/>
</dbReference>
<dbReference type="InterPro" id="IPR000305">
    <property type="entry name" value="GIY-YIG_endonuc"/>
</dbReference>
<dbReference type="InterPro" id="IPR035901">
    <property type="entry name" value="GIY-YIG_endonuc_sf"/>
</dbReference>
<dbReference type="InterPro" id="IPR027520">
    <property type="entry name" value="Slx1"/>
</dbReference>
<dbReference type="InterPro" id="IPR048749">
    <property type="entry name" value="SLX1_C"/>
</dbReference>
<dbReference type="InterPro" id="IPR050381">
    <property type="entry name" value="SLX1_endonuclease"/>
</dbReference>
<dbReference type="InterPro" id="IPR013083">
    <property type="entry name" value="Znf_RING/FYVE/PHD"/>
</dbReference>
<dbReference type="PANTHER" id="PTHR20208">
    <property type="entry name" value="STRUCTURE-SPECIFIC ENDONUCLEASE SUBUNIT SLX1"/>
    <property type="match status" value="1"/>
</dbReference>
<dbReference type="PANTHER" id="PTHR20208:SF10">
    <property type="entry name" value="STRUCTURE-SPECIFIC ENDONUCLEASE SUBUNIT SLX1"/>
    <property type="match status" value="1"/>
</dbReference>
<dbReference type="Pfam" id="PF01541">
    <property type="entry name" value="GIY-YIG"/>
    <property type="match status" value="1"/>
</dbReference>
<dbReference type="Pfam" id="PF21202">
    <property type="entry name" value="SLX1_C"/>
    <property type="match status" value="1"/>
</dbReference>
<dbReference type="SMART" id="SM00465">
    <property type="entry name" value="GIYc"/>
    <property type="match status" value="1"/>
</dbReference>
<dbReference type="SUPFAM" id="SSF82771">
    <property type="entry name" value="GIY-YIG endonuclease"/>
    <property type="match status" value="1"/>
</dbReference>
<dbReference type="PROSITE" id="PS50164">
    <property type="entry name" value="GIY_YIG"/>
    <property type="match status" value="1"/>
</dbReference>
<reference key="1">
    <citation type="journal article" date="2000" name="Science">
        <title>The genome sequence of Drosophila melanogaster.</title>
        <authorList>
            <person name="Adams M.D."/>
            <person name="Celniker S.E."/>
            <person name="Holt R.A."/>
            <person name="Evans C.A."/>
            <person name="Gocayne J.D."/>
            <person name="Amanatides P.G."/>
            <person name="Scherer S.E."/>
            <person name="Li P.W."/>
            <person name="Hoskins R.A."/>
            <person name="Galle R.F."/>
            <person name="George R.A."/>
            <person name="Lewis S.E."/>
            <person name="Richards S."/>
            <person name="Ashburner M."/>
            <person name="Henderson S.N."/>
            <person name="Sutton G.G."/>
            <person name="Wortman J.R."/>
            <person name="Yandell M.D."/>
            <person name="Zhang Q."/>
            <person name="Chen L.X."/>
            <person name="Brandon R.C."/>
            <person name="Rogers Y.-H.C."/>
            <person name="Blazej R.G."/>
            <person name="Champe M."/>
            <person name="Pfeiffer B.D."/>
            <person name="Wan K.H."/>
            <person name="Doyle C."/>
            <person name="Baxter E.G."/>
            <person name="Helt G."/>
            <person name="Nelson C.R."/>
            <person name="Miklos G.L.G."/>
            <person name="Abril J.F."/>
            <person name="Agbayani A."/>
            <person name="An H.-J."/>
            <person name="Andrews-Pfannkoch C."/>
            <person name="Baldwin D."/>
            <person name="Ballew R.M."/>
            <person name="Basu A."/>
            <person name="Baxendale J."/>
            <person name="Bayraktaroglu L."/>
            <person name="Beasley E.M."/>
            <person name="Beeson K.Y."/>
            <person name="Benos P.V."/>
            <person name="Berman B.P."/>
            <person name="Bhandari D."/>
            <person name="Bolshakov S."/>
            <person name="Borkova D."/>
            <person name="Botchan M.R."/>
            <person name="Bouck J."/>
            <person name="Brokstein P."/>
            <person name="Brottier P."/>
            <person name="Burtis K.C."/>
            <person name="Busam D.A."/>
            <person name="Butler H."/>
            <person name="Cadieu E."/>
            <person name="Center A."/>
            <person name="Chandra I."/>
            <person name="Cherry J.M."/>
            <person name="Cawley S."/>
            <person name="Dahlke C."/>
            <person name="Davenport L.B."/>
            <person name="Davies P."/>
            <person name="de Pablos B."/>
            <person name="Delcher A."/>
            <person name="Deng Z."/>
            <person name="Mays A.D."/>
            <person name="Dew I."/>
            <person name="Dietz S.M."/>
            <person name="Dodson K."/>
            <person name="Doup L.E."/>
            <person name="Downes M."/>
            <person name="Dugan-Rocha S."/>
            <person name="Dunkov B.C."/>
            <person name="Dunn P."/>
            <person name="Durbin K.J."/>
            <person name="Evangelista C.C."/>
            <person name="Ferraz C."/>
            <person name="Ferriera S."/>
            <person name="Fleischmann W."/>
            <person name="Fosler C."/>
            <person name="Gabrielian A.E."/>
            <person name="Garg N.S."/>
            <person name="Gelbart W.M."/>
            <person name="Glasser K."/>
            <person name="Glodek A."/>
            <person name="Gong F."/>
            <person name="Gorrell J.H."/>
            <person name="Gu Z."/>
            <person name="Guan P."/>
            <person name="Harris M."/>
            <person name="Harris N.L."/>
            <person name="Harvey D.A."/>
            <person name="Heiman T.J."/>
            <person name="Hernandez J.R."/>
            <person name="Houck J."/>
            <person name="Hostin D."/>
            <person name="Houston K.A."/>
            <person name="Howland T.J."/>
            <person name="Wei M.-H."/>
            <person name="Ibegwam C."/>
            <person name="Jalali M."/>
            <person name="Kalush F."/>
            <person name="Karpen G.H."/>
            <person name="Ke Z."/>
            <person name="Kennison J.A."/>
            <person name="Ketchum K.A."/>
            <person name="Kimmel B.E."/>
            <person name="Kodira C.D."/>
            <person name="Kraft C.L."/>
            <person name="Kravitz S."/>
            <person name="Kulp D."/>
            <person name="Lai Z."/>
            <person name="Lasko P."/>
            <person name="Lei Y."/>
            <person name="Levitsky A.A."/>
            <person name="Li J.H."/>
            <person name="Li Z."/>
            <person name="Liang Y."/>
            <person name="Lin X."/>
            <person name="Liu X."/>
            <person name="Mattei B."/>
            <person name="McIntosh T.C."/>
            <person name="McLeod M.P."/>
            <person name="McPherson D."/>
            <person name="Merkulov G."/>
            <person name="Milshina N.V."/>
            <person name="Mobarry C."/>
            <person name="Morris J."/>
            <person name="Moshrefi A."/>
            <person name="Mount S.M."/>
            <person name="Moy M."/>
            <person name="Murphy B."/>
            <person name="Murphy L."/>
            <person name="Muzny D.M."/>
            <person name="Nelson D.L."/>
            <person name="Nelson D.R."/>
            <person name="Nelson K.A."/>
            <person name="Nixon K."/>
            <person name="Nusskern D.R."/>
            <person name="Pacleb J.M."/>
            <person name="Palazzolo M."/>
            <person name="Pittman G.S."/>
            <person name="Pan S."/>
            <person name="Pollard J."/>
            <person name="Puri V."/>
            <person name="Reese M.G."/>
            <person name="Reinert K."/>
            <person name="Remington K."/>
            <person name="Saunders R.D.C."/>
            <person name="Scheeler F."/>
            <person name="Shen H."/>
            <person name="Shue B.C."/>
            <person name="Siden-Kiamos I."/>
            <person name="Simpson M."/>
            <person name="Skupski M.P."/>
            <person name="Smith T.J."/>
            <person name="Spier E."/>
            <person name="Spradling A.C."/>
            <person name="Stapleton M."/>
            <person name="Strong R."/>
            <person name="Sun E."/>
            <person name="Svirskas R."/>
            <person name="Tector C."/>
            <person name="Turner R."/>
            <person name="Venter E."/>
            <person name="Wang A.H."/>
            <person name="Wang X."/>
            <person name="Wang Z.-Y."/>
            <person name="Wassarman D.A."/>
            <person name="Weinstock G.M."/>
            <person name="Weissenbach J."/>
            <person name="Williams S.M."/>
            <person name="Woodage T."/>
            <person name="Worley K.C."/>
            <person name="Wu D."/>
            <person name="Yang S."/>
            <person name="Yao Q.A."/>
            <person name="Ye J."/>
            <person name="Yeh R.-F."/>
            <person name="Zaveri J.S."/>
            <person name="Zhan M."/>
            <person name="Zhang G."/>
            <person name="Zhao Q."/>
            <person name="Zheng L."/>
            <person name="Zheng X.H."/>
            <person name="Zhong F.N."/>
            <person name="Zhong W."/>
            <person name="Zhou X."/>
            <person name="Zhu S.C."/>
            <person name="Zhu X."/>
            <person name="Smith H.O."/>
            <person name="Gibbs R.A."/>
            <person name="Myers E.W."/>
            <person name="Rubin G.M."/>
            <person name="Venter J.C."/>
        </authorList>
    </citation>
    <scope>NUCLEOTIDE SEQUENCE [LARGE SCALE GENOMIC DNA]</scope>
    <source>
        <strain>Berkeley</strain>
    </source>
</reference>
<reference key="2">
    <citation type="journal article" date="2002" name="Genome Biol.">
        <title>Annotation of the Drosophila melanogaster euchromatic genome: a systematic review.</title>
        <authorList>
            <person name="Misra S."/>
            <person name="Crosby M.A."/>
            <person name="Mungall C.J."/>
            <person name="Matthews B.B."/>
            <person name="Campbell K.S."/>
            <person name="Hradecky P."/>
            <person name="Huang Y."/>
            <person name="Kaminker J.S."/>
            <person name="Millburn G.H."/>
            <person name="Prochnik S.E."/>
            <person name="Smith C.D."/>
            <person name="Tupy J.L."/>
            <person name="Whitfield E.J."/>
            <person name="Bayraktaroglu L."/>
            <person name="Berman B.P."/>
            <person name="Bettencourt B.R."/>
            <person name="Celniker S.E."/>
            <person name="de Grey A.D.N.J."/>
            <person name="Drysdale R.A."/>
            <person name="Harris N.L."/>
            <person name="Richter J."/>
            <person name="Russo S."/>
            <person name="Schroeder A.J."/>
            <person name="Shu S.Q."/>
            <person name="Stapleton M."/>
            <person name="Yamada C."/>
            <person name="Ashburner M."/>
            <person name="Gelbart W.M."/>
            <person name="Rubin G.M."/>
            <person name="Lewis S.E."/>
        </authorList>
    </citation>
    <scope>GENOME REANNOTATION</scope>
    <source>
        <strain>Berkeley</strain>
    </source>
</reference>
<reference key="3">
    <citation type="submission" date="2006-10" db="EMBL/GenBank/DDBJ databases">
        <authorList>
            <person name="Stapleton M."/>
            <person name="Carlson J.W."/>
            <person name="Frise E."/>
            <person name="Kapadia B."/>
            <person name="Park S."/>
            <person name="Wan K.H."/>
            <person name="Yu C."/>
            <person name="Celniker S.E."/>
        </authorList>
    </citation>
    <scope>NUCLEOTIDE SEQUENCE [LARGE SCALE MRNA]</scope>
    <source>
        <strain>Berkeley</strain>
    </source>
</reference>
<reference key="4">
    <citation type="journal article" date="2009" name="Cell">
        <title>Human SLX4 is a Holliday junction resolvase subunit that binds multiple DNA repair/recombination endonucleases.</title>
        <authorList>
            <person name="Fekairi S."/>
            <person name="Scaglione S."/>
            <person name="Chahwan C."/>
            <person name="Taylor E.R."/>
            <person name="Tissier A."/>
            <person name="Coulon S."/>
            <person name="Dong M.-Q."/>
            <person name="Ruse C."/>
            <person name="Yates J.R. III"/>
            <person name="Russell P."/>
            <person name="Fuchs R.P."/>
            <person name="McGowan C.H."/>
            <person name="Gaillard P.-H.L."/>
        </authorList>
    </citation>
    <scope>INTERACTION MUS312</scope>
</reference>
<reference key="5">
    <citation type="journal article" date="2009" name="Mol. Cell">
        <title>Drosophila MUS312 and the vertebrate ortholog BTBD12 interact with DNA structure-specific endonucleases in DNA repair and recombination.</title>
        <authorList>
            <person name="Andersen S.L."/>
            <person name="Bergstralh D.T."/>
            <person name="Kohl K.P."/>
            <person name="LaRocque J.R."/>
            <person name="Moore C.B."/>
            <person name="Sekelsky J."/>
        </authorList>
    </citation>
    <scope>INTERACTION WITH MUS312</scope>
</reference>
<protein>
    <recommendedName>
        <fullName evidence="1">Structure-specific endonuclease subunit SLX1 homolog</fullName>
        <ecNumber evidence="1">3.1.-.-</ecNumber>
    </recommendedName>
</protein>
<organism>
    <name type="scientific">Drosophila melanogaster</name>
    <name type="common">Fruit fly</name>
    <dbReference type="NCBI Taxonomy" id="7227"/>
    <lineage>
        <taxon>Eukaryota</taxon>
        <taxon>Metazoa</taxon>
        <taxon>Ecdysozoa</taxon>
        <taxon>Arthropoda</taxon>
        <taxon>Hexapoda</taxon>
        <taxon>Insecta</taxon>
        <taxon>Pterygota</taxon>
        <taxon>Neoptera</taxon>
        <taxon>Endopterygota</taxon>
        <taxon>Diptera</taxon>
        <taxon>Brachycera</taxon>
        <taxon>Muscomorpha</taxon>
        <taxon>Ephydroidea</taxon>
        <taxon>Drosophilidae</taxon>
        <taxon>Drosophila</taxon>
        <taxon>Sophophora</taxon>
    </lineage>
</organism>
<evidence type="ECO:0000255" key="1">
    <source>
        <dbReference type="HAMAP-Rule" id="MF_03100"/>
    </source>
</evidence>
<evidence type="ECO:0000256" key="2">
    <source>
        <dbReference type="SAM" id="MobiDB-lite"/>
    </source>
</evidence>
<evidence type="ECO:0000305" key="3"/>
<accession>Q9VN41</accession>
<accession>Q058Y9</accession>
<comment type="function">
    <text evidence="1">Catalytic subunit of a heterodimeric structure-specific endonuclease that resolves DNA secondary structures generated during DNA repair and recombination. Has endonuclease activity towards branched DNA substrates, introducing single-strand cuts in duplex DNA close to junctions with ss-DNA.</text>
</comment>
<comment type="cofactor">
    <cofactor evidence="1">
        <name>a divalent metal cation</name>
        <dbReference type="ChEBI" id="CHEBI:60240"/>
    </cofactor>
</comment>
<comment type="subunit">
    <text>Forms a heterodimer with mus312/SLX4.</text>
</comment>
<comment type="subcellular location">
    <subcellularLocation>
        <location evidence="1">Nucleus</location>
    </subcellularLocation>
</comment>
<comment type="similarity">
    <text evidence="1">Belongs to the SLX1 family.</text>
</comment>
<comment type="sequence caution" evidence="3">
    <conflict type="erroneous initiation">
        <sequence resource="EMBL-CDS" id="ABJ17012"/>
    </conflict>
    <text>Extended N-terminus.</text>
</comment>